<feature type="chain" id="PRO_0000326096" description="Acyltransferase PGAP2">
    <location>
        <begin position="1"/>
        <end position="254"/>
    </location>
</feature>
<feature type="topological domain" description="Cytoplasmic" evidence="3">
    <location>
        <begin position="1"/>
        <end position="23"/>
    </location>
</feature>
<feature type="transmembrane region" description="Helical" evidence="3">
    <location>
        <begin position="24"/>
        <end position="44"/>
    </location>
</feature>
<feature type="topological domain" description="Lumenal" evidence="3">
    <location>
        <begin position="45"/>
        <end position="114"/>
    </location>
</feature>
<feature type="transmembrane region" description="Helical" evidence="3">
    <location>
        <begin position="115"/>
        <end position="135"/>
    </location>
</feature>
<feature type="topological domain" description="Cytoplasmic" evidence="3">
    <location>
        <begin position="136"/>
        <end position="143"/>
    </location>
</feature>
<feature type="transmembrane region" description="Helical" evidence="3">
    <location>
        <begin position="144"/>
        <end position="164"/>
    </location>
</feature>
<feature type="topological domain" description="Lumenal" evidence="3">
    <location>
        <begin position="165"/>
        <end position="185"/>
    </location>
</feature>
<feature type="transmembrane region" description="Helical" evidence="3">
    <location>
        <begin position="186"/>
        <end position="206"/>
    </location>
</feature>
<feature type="topological domain" description="Cytoplasmic" evidence="3">
    <location>
        <begin position="207"/>
        <end position="209"/>
    </location>
</feature>
<feature type="transmembrane region" description="Helical" evidence="3">
    <location>
        <begin position="210"/>
        <end position="230"/>
    </location>
</feature>
<feature type="topological domain" description="Lumenal" evidence="3">
    <location>
        <begin position="231"/>
        <end position="254"/>
    </location>
</feature>
<feature type="splice variant" id="VSP_032554" description="In isoform 2." evidence="6">
    <location>
        <begin position="172"/>
        <end position="175"/>
    </location>
</feature>
<dbReference type="EC" id="2.3.-.-" evidence="1"/>
<dbReference type="EMBL" id="U57715">
    <property type="protein sequence ID" value="AAB07050.1"/>
    <property type="status" value="ALT_FRAME"/>
    <property type="molecule type" value="mRNA"/>
</dbReference>
<dbReference type="EMBL" id="AB236144">
    <property type="protein sequence ID" value="BAE80228.1"/>
    <property type="molecule type" value="mRNA"/>
</dbReference>
<dbReference type="PIR" id="JC6168">
    <property type="entry name" value="JC6168"/>
</dbReference>
<dbReference type="RefSeq" id="NP_446347.2">
    <molecule id="Q2ABP3-2"/>
    <property type="nucleotide sequence ID" value="NM_053895.2"/>
</dbReference>
<dbReference type="RefSeq" id="XP_006229899.1">
    <molecule id="Q2ABP3-1"/>
    <property type="nucleotide sequence ID" value="XM_006229837.5"/>
</dbReference>
<dbReference type="RefSeq" id="XP_063121657.1">
    <molecule id="Q2ABP3-2"/>
    <property type="nucleotide sequence ID" value="XM_063265587.1"/>
</dbReference>
<dbReference type="FunCoup" id="Q2ABP3">
    <property type="interactions" value="1267"/>
</dbReference>
<dbReference type="STRING" id="10116.ENSRNOP00000052110"/>
<dbReference type="PhosphoSitePlus" id="Q2ABP3"/>
<dbReference type="PaxDb" id="10116-ENSRNOP00000027628"/>
<dbReference type="GeneID" id="116675"/>
<dbReference type="UCSC" id="RGD:619744">
    <molecule id="Q2ABP3-1"/>
    <property type="organism name" value="rat"/>
</dbReference>
<dbReference type="AGR" id="RGD:619744"/>
<dbReference type="CTD" id="27315"/>
<dbReference type="RGD" id="619744">
    <property type="gene designation" value="Pgap2"/>
</dbReference>
<dbReference type="VEuPathDB" id="HostDB:ENSRNOG00000020371"/>
<dbReference type="eggNOG" id="KOG3979">
    <property type="taxonomic scope" value="Eukaryota"/>
</dbReference>
<dbReference type="HOGENOM" id="CLU_061191_1_0_1"/>
<dbReference type="InParanoid" id="Q2ABP3"/>
<dbReference type="PhylomeDB" id="Q2ABP3"/>
<dbReference type="TreeFam" id="TF314112"/>
<dbReference type="PRO" id="PR:Q2ABP3"/>
<dbReference type="Proteomes" id="UP000002494">
    <property type="component" value="Chromosome 1"/>
</dbReference>
<dbReference type="Bgee" id="ENSRNOG00000020371">
    <property type="expression patterns" value="Expressed in lung and 19 other cell types or tissues"/>
</dbReference>
<dbReference type="ExpressionAtlas" id="Q2ABP3">
    <property type="expression patterns" value="baseline and differential"/>
</dbReference>
<dbReference type="GO" id="GO:0005789">
    <property type="term" value="C:endoplasmic reticulum membrane"/>
    <property type="evidence" value="ECO:0000314"/>
    <property type="project" value="UniProtKB"/>
</dbReference>
<dbReference type="GO" id="GO:0000139">
    <property type="term" value="C:Golgi membrane"/>
    <property type="evidence" value="ECO:0000314"/>
    <property type="project" value="UniProtKB"/>
</dbReference>
<dbReference type="GO" id="GO:0006506">
    <property type="term" value="P:GPI anchor biosynthetic process"/>
    <property type="evidence" value="ECO:0000315"/>
    <property type="project" value="UniProtKB"/>
</dbReference>
<dbReference type="GO" id="GO:0072659">
    <property type="term" value="P:protein localization to plasma membrane"/>
    <property type="evidence" value="ECO:0000316"/>
    <property type="project" value="RGD"/>
</dbReference>
<dbReference type="InterPro" id="IPR019402">
    <property type="entry name" value="Frag1/DRAM/Sfk1"/>
</dbReference>
<dbReference type="InterPro" id="IPR039545">
    <property type="entry name" value="PGAP2"/>
</dbReference>
<dbReference type="PANTHER" id="PTHR12892">
    <property type="entry name" value="FGF RECEPTOR ACTIVATING PROTEIN 1"/>
    <property type="match status" value="1"/>
</dbReference>
<dbReference type="PANTHER" id="PTHR12892:SF11">
    <property type="entry name" value="POST-GPI ATTACHMENT TO PROTEINS FACTOR 2"/>
    <property type="match status" value="1"/>
</dbReference>
<dbReference type="Pfam" id="PF10277">
    <property type="entry name" value="Frag1"/>
    <property type="match status" value="1"/>
</dbReference>
<proteinExistence type="evidence at transcript level"/>
<sequence length="254" mass="29491">MYQVPLTLDRDGTLVRLRFTMVALITVCCPLVAFFFCILWSLLFHFKETTSTHCGVPNYLPSVSSAIGGEVPQRYVWRFCIGLHSAPRFLTAFAYWNHYLSCASPCPGYRLLCRLNFSLNVVENLALLVLTYVSSSEDFTIHENAFIVFIAASLSYMLLTCILWRLTKKHTVSQEDRKSYSWKQRLFIINFISFFSALAVYFRHNMYCEAGVYTIFAILEYTVVLTNMAFHMTAWWDFGNKELLITSQPEEKRF</sequence>
<organism>
    <name type="scientific">Rattus norvegicus</name>
    <name type="common">Rat</name>
    <dbReference type="NCBI Taxonomy" id="10116"/>
    <lineage>
        <taxon>Eukaryota</taxon>
        <taxon>Metazoa</taxon>
        <taxon>Chordata</taxon>
        <taxon>Craniata</taxon>
        <taxon>Vertebrata</taxon>
        <taxon>Euteleostomi</taxon>
        <taxon>Mammalia</taxon>
        <taxon>Eutheria</taxon>
        <taxon>Euarchontoglires</taxon>
        <taxon>Glires</taxon>
        <taxon>Rodentia</taxon>
        <taxon>Myomorpha</taxon>
        <taxon>Muroidea</taxon>
        <taxon>Muridae</taxon>
        <taxon>Murinae</taxon>
        <taxon>Rattus</taxon>
    </lineage>
</organism>
<reference key="1">
    <citation type="journal article" date="1996" name="Proc. Natl. Acad. Sci. U.S.A.">
        <title>FRAG1, a gene that potently activates fibroblast growth factor receptor by C-terminal fusion through chromosomal rearrangement.</title>
        <authorList>
            <person name="Lorenzi M.V."/>
            <person name="Horii Y."/>
            <person name="Yamanaka R."/>
            <person name="Sakaguchi K."/>
            <person name="Miki T."/>
        </authorList>
    </citation>
    <scope>NUCLEOTIDE SEQUENCE [MRNA] (ISOFORM 2)</scope>
    <scope>TISSUE SPECIFICITY</scope>
    <scope>SUBCELLULAR LOCATION</scope>
    <source>
        <tissue>Brain</tissue>
    </source>
</reference>
<reference key="2">
    <citation type="journal article" date="2006" name="Mol. Biol. Cell">
        <title>PGAP2 is essential for correct processing and stable expression of GPI-anchored proteins.</title>
        <authorList>
            <person name="Tashima Y."/>
            <person name="Taguchi R."/>
            <person name="Murata C."/>
            <person name="Ashida H."/>
            <person name="Kinoshita T."/>
            <person name="Maeda Y."/>
        </authorList>
    </citation>
    <scope>NUCLEOTIDE SEQUENCE [MRNA] (ISOFORM 1)</scope>
    <scope>SUBCELLULAR LOCATION</scope>
</reference>
<gene>
    <name evidence="9" type="primary">Pgap2</name>
    <name evidence="6" type="synonym">Frag1</name>
</gene>
<comment type="function">
    <text evidence="1">Involved in the fatty acid remodeling steps of GPI-anchor maturation where the unsaturated acyl chain at sn-2 of inositol phosphate is replaced by a saturated stearoyl chain. May catalyze the second step of the fatty acid remodeling, by reacylating a lyso-GPI intermediate at sn-2 of inositol phosphate by a saturated chain. The fatty acid remodeling steps is critical for the integration of GPI-APs into lipid rafts.</text>
</comment>
<comment type="subunit">
    <text evidence="2">Interacts with PGAP2IP.</text>
</comment>
<comment type="subcellular location">
    <subcellularLocation>
        <location evidence="4 5">Golgi apparatus membrane</location>
        <topology>Multi-pass membrane protein</topology>
    </subcellularLocation>
</comment>
<comment type="alternative products">
    <event type="alternative splicing"/>
    <isoform>
        <id>Q2ABP3-1</id>
        <name>1</name>
        <sequence type="displayed"/>
    </isoform>
    <isoform>
        <id>Q2ABP3-2</id>
        <name>2</name>
        <sequence type="described" ref="VSP_032554"/>
    </isoform>
</comment>
<comment type="tissue specificity">
    <text evidence="5">Expressed in heart, brain, spleen, lung, liver, skeletal muscle, kidney and testis.</text>
</comment>
<comment type="similarity">
    <text evidence="7">Belongs to the PGAP2 family.</text>
</comment>
<comment type="sequence caution" evidence="7">
    <conflict type="frameshift">
        <sequence resource="EMBL-CDS" id="AAB07050"/>
    </conflict>
</comment>
<evidence type="ECO:0000250" key="1">
    <source>
        <dbReference type="UniProtKB" id="Q2ABP2"/>
    </source>
</evidence>
<evidence type="ECO:0000250" key="2">
    <source>
        <dbReference type="UniProtKB" id="Q3TQR0"/>
    </source>
</evidence>
<evidence type="ECO:0000255" key="3"/>
<evidence type="ECO:0000269" key="4">
    <source>
    </source>
</evidence>
<evidence type="ECO:0000269" key="5">
    <source>
    </source>
</evidence>
<evidence type="ECO:0000303" key="6">
    <source>
    </source>
</evidence>
<evidence type="ECO:0000305" key="7"/>
<evidence type="ECO:0000305" key="8">
    <source>
    </source>
</evidence>
<evidence type="ECO:0000312" key="9">
    <source>
        <dbReference type="RGD" id="619744"/>
    </source>
</evidence>
<accession>Q2ABP3</accession>
<accession>P70561</accession>
<protein>
    <recommendedName>
        <fullName evidence="7">Acyltransferase PGAP2</fullName>
        <ecNumber evidence="1">2.3.-.-</ecNumber>
    </recommendedName>
    <alternativeName>
        <fullName>FGF receptor-activating protein 1</fullName>
    </alternativeName>
    <alternativeName>
        <fullName evidence="8">Post-GPI attachment to proteins factor 2</fullName>
    </alternativeName>
</protein>
<name>PGAP2_RAT</name>
<keyword id="KW-0025">Alternative splicing</keyword>
<keyword id="KW-0160">Chromosomal rearrangement</keyword>
<keyword id="KW-0333">Golgi apparatus</keyword>
<keyword id="KW-0337">GPI-anchor biosynthesis</keyword>
<keyword id="KW-0472">Membrane</keyword>
<keyword id="KW-1185">Reference proteome</keyword>
<keyword id="KW-0808">Transferase</keyword>
<keyword id="KW-0812">Transmembrane</keyword>
<keyword id="KW-1133">Transmembrane helix</keyword>